<keyword id="KW-1185">Reference proteome</keyword>
<keyword id="KW-0687">Ribonucleoprotein</keyword>
<keyword id="KW-0689">Ribosomal protein</keyword>
<keyword id="KW-0694">RNA-binding</keyword>
<keyword id="KW-0699">rRNA-binding</keyword>
<keyword id="KW-0820">tRNA-binding</keyword>
<gene>
    <name evidence="1" type="primary">rplP</name>
    <name type="ordered locus">Pnuc_0060</name>
</gene>
<protein>
    <recommendedName>
        <fullName evidence="1">Large ribosomal subunit protein uL16</fullName>
    </recommendedName>
    <alternativeName>
        <fullName evidence="3">50S ribosomal protein L16</fullName>
    </alternativeName>
</protein>
<dbReference type="EMBL" id="CP000655">
    <property type="protein sequence ID" value="ABP33282.1"/>
    <property type="molecule type" value="Genomic_DNA"/>
</dbReference>
<dbReference type="RefSeq" id="WP_011901907.1">
    <property type="nucleotide sequence ID" value="NC_009379.1"/>
</dbReference>
<dbReference type="SMR" id="A4SUW8"/>
<dbReference type="GeneID" id="31480406"/>
<dbReference type="KEGG" id="pnu:Pnuc_0060"/>
<dbReference type="eggNOG" id="COG0197">
    <property type="taxonomic scope" value="Bacteria"/>
</dbReference>
<dbReference type="HOGENOM" id="CLU_078858_2_1_4"/>
<dbReference type="Proteomes" id="UP000000231">
    <property type="component" value="Chromosome"/>
</dbReference>
<dbReference type="GO" id="GO:0022625">
    <property type="term" value="C:cytosolic large ribosomal subunit"/>
    <property type="evidence" value="ECO:0007669"/>
    <property type="project" value="TreeGrafter"/>
</dbReference>
<dbReference type="GO" id="GO:0019843">
    <property type="term" value="F:rRNA binding"/>
    <property type="evidence" value="ECO:0007669"/>
    <property type="project" value="UniProtKB-UniRule"/>
</dbReference>
<dbReference type="GO" id="GO:0003735">
    <property type="term" value="F:structural constituent of ribosome"/>
    <property type="evidence" value="ECO:0007669"/>
    <property type="project" value="InterPro"/>
</dbReference>
<dbReference type="GO" id="GO:0000049">
    <property type="term" value="F:tRNA binding"/>
    <property type="evidence" value="ECO:0007669"/>
    <property type="project" value="UniProtKB-KW"/>
</dbReference>
<dbReference type="GO" id="GO:0006412">
    <property type="term" value="P:translation"/>
    <property type="evidence" value="ECO:0007669"/>
    <property type="project" value="UniProtKB-UniRule"/>
</dbReference>
<dbReference type="CDD" id="cd01433">
    <property type="entry name" value="Ribosomal_L16_L10e"/>
    <property type="match status" value="1"/>
</dbReference>
<dbReference type="FunFam" id="3.90.1170.10:FF:000001">
    <property type="entry name" value="50S ribosomal protein L16"/>
    <property type="match status" value="1"/>
</dbReference>
<dbReference type="Gene3D" id="3.90.1170.10">
    <property type="entry name" value="Ribosomal protein L10e/L16"/>
    <property type="match status" value="1"/>
</dbReference>
<dbReference type="HAMAP" id="MF_01342">
    <property type="entry name" value="Ribosomal_uL16"/>
    <property type="match status" value="1"/>
</dbReference>
<dbReference type="InterPro" id="IPR047873">
    <property type="entry name" value="Ribosomal_uL16"/>
</dbReference>
<dbReference type="InterPro" id="IPR000114">
    <property type="entry name" value="Ribosomal_uL16_bact-type"/>
</dbReference>
<dbReference type="InterPro" id="IPR020798">
    <property type="entry name" value="Ribosomal_uL16_CS"/>
</dbReference>
<dbReference type="InterPro" id="IPR016180">
    <property type="entry name" value="Ribosomal_uL16_dom"/>
</dbReference>
<dbReference type="InterPro" id="IPR036920">
    <property type="entry name" value="Ribosomal_uL16_sf"/>
</dbReference>
<dbReference type="NCBIfam" id="TIGR01164">
    <property type="entry name" value="rplP_bact"/>
    <property type="match status" value="1"/>
</dbReference>
<dbReference type="PANTHER" id="PTHR12220">
    <property type="entry name" value="50S/60S RIBOSOMAL PROTEIN L16"/>
    <property type="match status" value="1"/>
</dbReference>
<dbReference type="PANTHER" id="PTHR12220:SF13">
    <property type="entry name" value="LARGE RIBOSOMAL SUBUNIT PROTEIN UL16M"/>
    <property type="match status" value="1"/>
</dbReference>
<dbReference type="Pfam" id="PF00252">
    <property type="entry name" value="Ribosomal_L16"/>
    <property type="match status" value="1"/>
</dbReference>
<dbReference type="PRINTS" id="PR00060">
    <property type="entry name" value="RIBOSOMALL16"/>
</dbReference>
<dbReference type="SUPFAM" id="SSF54686">
    <property type="entry name" value="Ribosomal protein L16p/L10e"/>
    <property type="match status" value="1"/>
</dbReference>
<dbReference type="PROSITE" id="PS00586">
    <property type="entry name" value="RIBOSOMAL_L16_1"/>
    <property type="match status" value="1"/>
</dbReference>
<reference key="1">
    <citation type="journal article" date="2012" name="Stand. Genomic Sci.">
        <title>Complete genome sequence of Polynucleobacter necessarius subsp. asymbioticus type strain (QLW-P1DMWA-1(T)).</title>
        <authorList>
            <person name="Meincke L."/>
            <person name="Copeland A."/>
            <person name="Lapidus A."/>
            <person name="Lucas S."/>
            <person name="Berry K.W."/>
            <person name="Del Rio T.G."/>
            <person name="Hammon N."/>
            <person name="Dalin E."/>
            <person name="Tice H."/>
            <person name="Pitluck S."/>
            <person name="Richardson P."/>
            <person name="Bruce D."/>
            <person name="Goodwin L."/>
            <person name="Han C."/>
            <person name="Tapia R."/>
            <person name="Detter J.C."/>
            <person name="Schmutz J."/>
            <person name="Brettin T."/>
            <person name="Larimer F."/>
            <person name="Land M."/>
            <person name="Hauser L."/>
            <person name="Kyrpides N.C."/>
            <person name="Ivanova N."/>
            <person name="Goker M."/>
            <person name="Woyke T."/>
            <person name="Wu Q.L."/>
            <person name="Pockl M."/>
            <person name="Hahn M.W."/>
            <person name="Klenk H.P."/>
        </authorList>
    </citation>
    <scope>NUCLEOTIDE SEQUENCE [LARGE SCALE GENOMIC DNA]</scope>
    <source>
        <strain>DSM 18221 / CIP 109841 / QLW-P1DMWA-1</strain>
    </source>
</reference>
<name>RL16_POLAQ</name>
<sequence length="137" mass="15449">MLQPKRRKYRKEQKGRNTGVATRGSSVAFGDFGLKAVGRGRLTARQIESARRAMTRHIKRGGRIWIRIFPDKPISQKPAEVRMGNGKGNPEYYVAEIQPGKVLYEMDGVDEQLAREAFKLAAAKLPLQTTFVIRHLG</sequence>
<accession>A4SUW8</accession>
<organism>
    <name type="scientific">Polynucleobacter asymbioticus (strain DSM 18221 / CIP 109841 / QLW-P1DMWA-1)</name>
    <name type="common">Polynucleobacter necessarius subsp. asymbioticus</name>
    <dbReference type="NCBI Taxonomy" id="312153"/>
    <lineage>
        <taxon>Bacteria</taxon>
        <taxon>Pseudomonadati</taxon>
        <taxon>Pseudomonadota</taxon>
        <taxon>Betaproteobacteria</taxon>
        <taxon>Burkholderiales</taxon>
        <taxon>Burkholderiaceae</taxon>
        <taxon>Polynucleobacter</taxon>
    </lineage>
</organism>
<proteinExistence type="inferred from homology"/>
<feature type="chain" id="PRO_1000086768" description="Large ribosomal subunit protein uL16">
    <location>
        <begin position="1"/>
        <end position="137"/>
    </location>
</feature>
<feature type="region of interest" description="Disordered" evidence="2">
    <location>
        <begin position="1"/>
        <end position="22"/>
    </location>
</feature>
<feature type="compositionally biased region" description="Basic residues" evidence="2">
    <location>
        <begin position="1"/>
        <end position="13"/>
    </location>
</feature>
<evidence type="ECO:0000255" key="1">
    <source>
        <dbReference type="HAMAP-Rule" id="MF_01342"/>
    </source>
</evidence>
<evidence type="ECO:0000256" key="2">
    <source>
        <dbReference type="SAM" id="MobiDB-lite"/>
    </source>
</evidence>
<evidence type="ECO:0000305" key="3"/>
<comment type="function">
    <text evidence="1">Binds 23S rRNA and is also seen to make contacts with the A and possibly P site tRNAs.</text>
</comment>
<comment type="subunit">
    <text evidence="1">Part of the 50S ribosomal subunit.</text>
</comment>
<comment type="similarity">
    <text evidence="1">Belongs to the universal ribosomal protein uL16 family.</text>
</comment>